<evidence type="ECO:0000255" key="1">
    <source>
        <dbReference type="HAMAP-Rule" id="MF_01399"/>
    </source>
</evidence>
<reference key="1">
    <citation type="submission" date="2003-11" db="EMBL/GenBank/DDBJ databases">
        <title>Whole genome sequence of Porphyra yezoensis chloroplast.</title>
        <authorList>
            <person name="Kunimoto M."/>
            <person name="Morishima K."/>
            <person name="Yoshikawa M."/>
            <person name="Fukuda S."/>
            <person name="Kobayashi T."/>
            <person name="Kobayashi M."/>
            <person name="Okazaki T."/>
            <person name="Ohara I."/>
            <person name="Nakayama I."/>
        </authorList>
    </citation>
    <scope>NUCLEOTIDE SEQUENCE [LARGE SCALE GENOMIC DNA]</scope>
    <source>
        <strain>U-51</strain>
    </source>
</reference>
<feature type="chain" id="PRO_0000277294" description="ATP synthase subunit b', chloroplastic">
    <location>
        <begin position="1"/>
        <end position="156"/>
    </location>
</feature>
<feature type="transmembrane region" description="Helical" evidence="1">
    <location>
        <begin position="20"/>
        <end position="42"/>
    </location>
</feature>
<name>ATPF2_PYRYE</name>
<sequence>MIDLPFLLAEEIEGGLFDFNGTLPLMALQFLTLMVLLNTIFYKPVTKVLDERDEYIRTTLTTASSMLVKADELAAKYEEDLSEARRNAQLKIASSQKEAQNIVSEDIKKAQLNAEKLIAEASKQLNVQKEEALKTLENQVDTLSDQIKVKLLSSQS</sequence>
<proteinExistence type="inferred from homology"/>
<keyword id="KW-0066">ATP synthesis</keyword>
<keyword id="KW-0067">ATP-binding</keyword>
<keyword id="KW-0138">CF(0)</keyword>
<keyword id="KW-0150">Chloroplast</keyword>
<keyword id="KW-0375">Hydrogen ion transport</keyword>
<keyword id="KW-0406">Ion transport</keyword>
<keyword id="KW-0472">Membrane</keyword>
<keyword id="KW-0547">Nucleotide-binding</keyword>
<keyword id="KW-0934">Plastid</keyword>
<keyword id="KW-0793">Thylakoid</keyword>
<keyword id="KW-0812">Transmembrane</keyword>
<keyword id="KW-1133">Transmembrane helix</keyword>
<keyword id="KW-0813">Transport</keyword>
<comment type="function">
    <text evidence="1">F(1)F(0) ATP synthase produces ATP from ADP in the presence of a proton or sodium gradient. F-type ATPases consist of two structural domains, F(1) containing the extramembraneous catalytic core and F(0) containing the membrane proton channel, linked together by a central stalk and a peripheral stalk. During catalysis, ATP synthesis in the catalytic domain of F(1) is coupled via a rotary mechanism of the central stalk subunits to proton translocation.</text>
</comment>
<comment type="function">
    <text evidence="1">Component of the F(0) channel, it forms part of the peripheral stalk, linking F(1) to F(0). The b'-subunit is a diverged and duplicated form of b found in plants and photosynthetic bacteria.</text>
</comment>
<comment type="subunit">
    <text evidence="1">F-type ATPases have 2 components, F(1) - the catalytic core - and F(0) - the membrane proton channel. F(1) has five subunits: alpha(3), beta(3), gamma(1), delta(1), epsilon(1). F(0) has four main subunits: a(1), b(1), b'(1) and c(10-14). The alpha and beta chains form an alternating ring which encloses part of the gamma chain. F(1) is attached to F(0) by a central stalk formed by the gamma and epsilon chains, while a peripheral stalk is formed by the delta, b and b' chains.</text>
</comment>
<comment type="subcellular location">
    <subcellularLocation>
        <location evidence="1">Plastid</location>
        <location evidence="1">Chloroplast thylakoid membrane</location>
        <topology evidence="1">Single-pass membrane protein</topology>
    </subcellularLocation>
</comment>
<comment type="miscellaneous">
    <text>In plastids the F-type ATPase is also known as CF(1)CF(0).</text>
</comment>
<comment type="similarity">
    <text evidence="1">Belongs to the ATPase B chain family.</text>
</comment>
<gene>
    <name evidence="1" type="primary">atpF2</name>
    <name evidence="1" type="synonym">atpG</name>
</gene>
<dbReference type="EMBL" id="AP006715">
    <property type="protein sequence ID" value="BAE92369.1"/>
    <property type="molecule type" value="Genomic_DNA"/>
</dbReference>
<dbReference type="RefSeq" id="YP_536926.1">
    <property type="nucleotide sequence ID" value="NC_007932.1"/>
</dbReference>
<dbReference type="SMR" id="Q1XDP2"/>
<dbReference type="GeneID" id="3978838"/>
<dbReference type="GO" id="GO:0009535">
    <property type="term" value="C:chloroplast thylakoid membrane"/>
    <property type="evidence" value="ECO:0007669"/>
    <property type="project" value="UniProtKB-SubCell"/>
</dbReference>
<dbReference type="GO" id="GO:0045259">
    <property type="term" value="C:proton-transporting ATP synthase complex"/>
    <property type="evidence" value="ECO:0007669"/>
    <property type="project" value="UniProtKB-KW"/>
</dbReference>
<dbReference type="GO" id="GO:0005524">
    <property type="term" value="F:ATP binding"/>
    <property type="evidence" value="ECO:0007669"/>
    <property type="project" value="UniProtKB-KW"/>
</dbReference>
<dbReference type="GO" id="GO:0046933">
    <property type="term" value="F:proton-transporting ATP synthase activity, rotational mechanism"/>
    <property type="evidence" value="ECO:0007669"/>
    <property type="project" value="UniProtKB-UniRule"/>
</dbReference>
<dbReference type="GO" id="GO:0046961">
    <property type="term" value="F:proton-transporting ATPase activity, rotational mechanism"/>
    <property type="evidence" value="ECO:0007669"/>
    <property type="project" value="TreeGrafter"/>
</dbReference>
<dbReference type="CDD" id="cd06503">
    <property type="entry name" value="ATP-synt_Fo_b"/>
    <property type="match status" value="1"/>
</dbReference>
<dbReference type="HAMAP" id="MF_01398">
    <property type="entry name" value="ATP_synth_b_bprime"/>
    <property type="match status" value="1"/>
</dbReference>
<dbReference type="HAMAP" id="MF_01399">
    <property type="entry name" value="ATP_synth_bprime"/>
    <property type="match status" value="1"/>
</dbReference>
<dbReference type="InterPro" id="IPR034679">
    <property type="entry name" value="ATP_synth_b"/>
</dbReference>
<dbReference type="InterPro" id="IPR002146">
    <property type="entry name" value="ATP_synth_b/b'su_bac/chlpt"/>
</dbReference>
<dbReference type="InterPro" id="IPR050059">
    <property type="entry name" value="ATP_synthase_B_chain"/>
</dbReference>
<dbReference type="NCBIfam" id="NF005607">
    <property type="entry name" value="PRK07353.1"/>
    <property type="match status" value="1"/>
</dbReference>
<dbReference type="PANTHER" id="PTHR33445">
    <property type="entry name" value="ATP SYNTHASE SUBUNIT B', CHLOROPLASTIC"/>
    <property type="match status" value="1"/>
</dbReference>
<dbReference type="PANTHER" id="PTHR33445:SF2">
    <property type="entry name" value="ATP SYNTHASE SUBUNIT B', CHLOROPLASTIC"/>
    <property type="match status" value="1"/>
</dbReference>
<dbReference type="Pfam" id="PF00430">
    <property type="entry name" value="ATP-synt_B"/>
    <property type="match status" value="1"/>
</dbReference>
<geneLocation type="chloroplast"/>
<accession>Q1XDP2</accession>
<organism>
    <name type="scientific">Pyropia yezoensis</name>
    <name type="common">Susabi-nori</name>
    <name type="synonym">Porphyra yezoensis</name>
    <dbReference type="NCBI Taxonomy" id="2788"/>
    <lineage>
        <taxon>Eukaryota</taxon>
        <taxon>Rhodophyta</taxon>
        <taxon>Bangiophyceae</taxon>
        <taxon>Bangiales</taxon>
        <taxon>Bangiaceae</taxon>
        <taxon>Pyropia</taxon>
    </lineage>
</organism>
<protein>
    <recommendedName>
        <fullName evidence="1">ATP synthase subunit b', chloroplastic</fullName>
    </recommendedName>
    <alternativeName>
        <fullName evidence="1">ATP synthase F(0) sector subunit b'</fullName>
    </alternativeName>
    <alternativeName>
        <fullName evidence="1">ATPase subunit II</fullName>
    </alternativeName>
</protein>